<evidence type="ECO:0000250" key="1">
    <source>
        <dbReference type="UniProtKB" id="Q6DQW3"/>
    </source>
</evidence>
<evidence type="ECO:0000269" key="2">
    <source>
    </source>
</evidence>
<evidence type="ECO:0000269" key="3">
    <source>
    </source>
</evidence>
<evidence type="ECO:0000303" key="4">
    <source>
    </source>
</evidence>
<evidence type="ECO:0000305" key="5">
    <source>
    </source>
</evidence>
<accession>Q0UI01</accession>
<protein>
    <recommendedName>
        <fullName evidence="4">Elsinochrome C biosynthesis cluster protein SNOG_08613</fullName>
    </recommendedName>
</protein>
<sequence>MALMIEKLAPPSKRSMTKFTQHCTGNCGQFWPKTWFWSRSSFIHWRLVSRHWPLAPFQLPKTTMAYALVNTKLSALRDIGN</sequence>
<gene>
    <name type="ORF">SNOG_08613</name>
</gene>
<organism>
    <name type="scientific">Phaeosphaeria nodorum (strain SN15 / ATCC MYA-4574 / FGSC 10173)</name>
    <name type="common">Glume blotch fungus</name>
    <name type="synonym">Parastagonospora nodorum</name>
    <dbReference type="NCBI Taxonomy" id="321614"/>
    <lineage>
        <taxon>Eukaryota</taxon>
        <taxon>Fungi</taxon>
        <taxon>Dikarya</taxon>
        <taxon>Ascomycota</taxon>
        <taxon>Pezizomycotina</taxon>
        <taxon>Dothideomycetes</taxon>
        <taxon>Pleosporomycetidae</taxon>
        <taxon>Pleosporales</taxon>
        <taxon>Pleosporineae</taxon>
        <taxon>Phaeosphaeriaceae</taxon>
        <taxon>Parastagonospora</taxon>
    </lineage>
</organism>
<proteinExistence type="evidence at transcript level"/>
<comment type="function">
    <text evidence="1 2 3 5">Part of the gene cluster that mediates the biosynthesis of elsinochrome C, a perelyenequinone phytotoxin structurally similar to cercosporin (PubMed:28251756, PubMed:30809363). The first step of elsinochrome C biosynthesis is performed by the polyketide synthase elcA which catalyzes the formation of nor-toralactone (PubMed:28251756, PubMed:30809363). The starter unit acyltransferase (SAT) domain of elcA initiates polyketide extension by the selective utilization of acetyl-CoA, which is elongated to the heptaketide in the beta-ketoacyl synthase (KS) domain by successive condensations with six malonyl units introduced by the malonyl acyltransferase (MAT) domain (By similarity). The product template (PT) domain catalyzes C4-C9 and C2-C11 aldol cyclizations and dehydrations to a trihydroxynaphthalene, which is thought to be delivered to the thioesterase (TE) domain for product release (By similarity). The bifunctional enzyme elcB then methylates nor-toralactone to toralactone before conducting an unusual oxidative aromatic ring opening (PubMed:28251756, PubMed:30809363). The next step in perylenequinone biosynthesis is an O-methylation at the nascent OH-6 of the elcB product performed by the O-methyltransferase elcD (PubMed:30809363). The oxidative coupling of the two monomeric naphthol units in perylenequinone biosynthesis is catalyzed by the FAD-dependent monooxygenase elcE and the multicopper oxidase elcG (PubMed:30809363). ElcG might catalyze the first intermolecular coupling in a regio- and stereo-selective manner via a phenol radical coupling mechanism and the elcE could forge the second C-C bond intramolecularly via a hydride transfer mechanism (PubMed:30809363). The fasciclin domain-containing protein elcF might also play a role duting this step (Probable). The last piece of the puzzle in the biosynthesis of elsinochrome C is the additional annulation by enolate coupling to afford the dihydrobenzo(ghi)perylenequinone system, catalyzed by the FAD-dependent monooxygenase elcH (PubMed:30809363).</text>
</comment>
<comment type="induction">
    <text evidence="2">Expression is up-regulated during the late stage of P.nodorum wheat leaf infection and is controlled by the cluster specific transporter elcR.</text>
</comment>
<feature type="chain" id="PRO_0000449877" description="Elsinochrome C biosynthesis cluster protein SNOG_08613">
    <location>
        <begin position="1"/>
        <end position="81"/>
    </location>
</feature>
<reference key="1">
    <citation type="journal article" date="2007" name="Plant Cell">
        <title>Dothideomycete-plant interactions illuminated by genome sequencing and EST analysis of the wheat pathogen Stagonospora nodorum.</title>
        <authorList>
            <person name="Hane J.K."/>
            <person name="Lowe R.G.T."/>
            <person name="Solomon P.S."/>
            <person name="Tan K.-C."/>
            <person name="Schoch C.L."/>
            <person name="Spatafora J.W."/>
            <person name="Crous P.W."/>
            <person name="Kodira C.D."/>
            <person name="Birren B.W."/>
            <person name="Galagan J.E."/>
            <person name="Torriani S.F.F."/>
            <person name="McDonald B.A."/>
            <person name="Oliver R.P."/>
        </authorList>
    </citation>
    <scope>NUCLEOTIDE SEQUENCE [LARGE SCALE GENOMIC DNA]</scope>
    <source>
        <strain>SN15 / ATCC MYA-4574 / FGSC 10173</strain>
    </source>
</reference>
<reference key="2">
    <citation type="journal article" date="2017" name="Environ. Microbiol.">
        <title>Functional genomics-guided discovery of a light-activated phytotoxin in the wheat pathogen Parastagonospora nodorum via pathway activation.</title>
        <authorList>
            <person name="Chooi Y.H."/>
            <person name="Zhang G."/>
            <person name="Hu J."/>
            <person name="Muria-Gonzalez M.J."/>
            <person name="Tran P.N."/>
            <person name="Pettitt A."/>
            <person name="Maier A.G."/>
            <person name="Barrow R.A."/>
            <person name="Solomon P.S."/>
        </authorList>
    </citation>
    <scope>INDUCTION</scope>
    <scope>FUNCTION</scope>
</reference>
<reference key="3">
    <citation type="journal article" date="2019" name="Chem. Sci.">
        <title>Heterologous biosynthesis of elsinochrome A sheds light on the formation of the photosensitive perylenequinone system.</title>
        <authorList>
            <person name="Hu J."/>
            <person name="Sarrami F."/>
            <person name="Li H."/>
            <person name="Zhang G."/>
            <person name="Stubbs K.A."/>
            <person name="Lacey E."/>
            <person name="Stewart S.G."/>
            <person name="Karton A."/>
            <person name="Piggott A.M."/>
            <person name="Chooi Y.H."/>
        </authorList>
    </citation>
    <scope>FUNCTION</scope>
</reference>
<dbReference type="EMBL" id="CH445337">
    <property type="protein sequence ID" value="EAT83781.1"/>
    <property type="molecule type" value="Genomic_DNA"/>
</dbReference>
<dbReference type="RefSeq" id="XP_001798922.1">
    <property type="nucleotide sequence ID" value="XM_001798870.1"/>
</dbReference>
<dbReference type="EnsemblFungi" id="SNOT_08613">
    <property type="protein sequence ID" value="SNOT_08613"/>
    <property type="gene ID" value="SNOG_08613"/>
</dbReference>
<dbReference type="GeneID" id="5975821"/>
<dbReference type="KEGG" id="pno:SNOG_08613"/>
<dbReference type="VEuPathDB" id="FungiDB:JI435_086130"/>
<dbReference type="HOGENOM" id="CLU_2574642_0_0_1"/>
<dbReference type="InParanoid" id="Q0UI01"/>
<dbReference type="Proteomes" id="UP000001055">
    <property type="component" value="Unassembled WGS sequence"/>
</dbReference>
<name>ELCX_PHANO</name>